<feature type="chain" id="PRO_0000168619" description="Hha toxicity modulator TomB">
    <location>
        <begin position="1"/>
        <end position="124"/>
    </location>
</feature>
<dbReference type="EMBL" id="AE014075">
    <property type="protein sequence ID" value="AAN79057.1"/>
    <property type="molecule type" value="Genomic_DNA"/>
</dbReference>
<dbReference type="RefSeq" id="WP_000344800.1">
    <property type="nucleotide sequence ID" value="NZ_CP051263.1"/>
</dbReference>
<dbReference type="SMR" id="P0AAR1"/>
<dbReference type="STRING" id="199310.c0579"/>
<dbReference type="GeneID" id="93776989"/>
<dbReference type="KEGG" id="ecc:c0579"/>
<dbReference type="eggNOG" id="ENOG502ZC6G">
    <property type="taxonomic scope" value="Bacteria"/>
</dbReference>
<dbReference type="HOGENOM" id="CLU_164850_0_0_6"/>
<dbReference type="BioCyc" id="ECOL199310:C0579-MONOMER"/>
<dbReference type="Proteomes" id="UP000001410">
    <property type="component" value="Chromosome"/>
</dbReference>
<dbReference type="GO" id="GO:0005737">
    <property type="term" value="C:cytoplasm"/>
    <property type="evidence" value="ECO:0007669"/>
    <property type="project" value="UniProtKB-SubCell"/>
</dbReference>
<dbReference type="GO" id="GO:0003677">
    <property type="term" value="F:DNA binding"/>
    <property type="evidence" value="ECO:0007669"/>
    <property type="project" value="UniProtKB-KW"/>
</dbReference>
<dbReference type="InterPro" id="IPR019693">
    <property type="entry name" value="Biofilm_formation_reg_YbaJ"/>
</dbReference>
<dbReference type="NCBIfam" id="NF007948">
    <property type="entry name" value="PRK10667.1"/>
    <property type="match status" value="1"/>
</dbReference>
<dbReference type="Pfam" id="PF10757">
    <property type="entry name" value="YbaJ"/>
    <property type="match status" value="1"/>
</dbReference>
<organism>
    <name type="scientific">Escherichia coli O6:H1 (strain CFT073 / ATCC 700928 / UPEC)</name>
    <dbReference type="NCBI Taxonomy" id="199310"/>
    <lineage>
        <taxon>Bacteria</taxon>
        <taxon>Pseudomonadati</taxon>
        <taxon>Pseudomonadota</taxon>
        <taxon>Gammaproteobacteria</taxon>
        <taxon>Enterobacterales</taxon>
        <taxon>Enterobacteriaceae</taxon>
        <taxon>Escherichia</taxon>
    </lineage>
</organism>
<accession>P0AAR1</accession>
<accession>P37611</accession>
<accession>P75708</accession>
<comment type="function">
    <text evidence="1">Attenuates Hha toxicity and regulates biofilm formation. Binds to various coding and intergenic regions of genomic DNA (By similarity).</text>
</comment>
<comment type="subcellular location">
    <subcellularLocation>
        <location evidence="1">Cytoplasm</location>
    </subcellularLocation>
</comment>
<comment type="disruption phenotype">
    <text evidence="2">Deletion of the tomB-hha operon causes reduced infection of the mouse bladder but not of the kidney.</text>
</comment>
<comment type="similarity">
    <text evidence="3">Belongs to the TomB family.</text>
</comment>
<evidence type="ECO:0000250" key="1"/>
<evidence type="ECO:0000269" key="2">
    <source>
    </source>
</evidence>
<evidence type="ECO:0000305" key="3"/>
<name>TOMB_ECOL6</name>
<proteinExistence type="inferred from homology"/>
<reference key="1">
    <citation type="journal article" date="2002" name="Proc. Natl. Acad. Sci. U.S.A.">
        <title>Extensive mosaic structure revealed by the complete genome sequence of uropathogenic Escherichia coli.</title>
        <authorList>
            <person name="Welch R.A."/>
            <person name="Burland V."/>
            <person name="Plunkett G. III"/>
            <person name="Redford P."/>
            <person name="Roesch P."/>
            <person name="Rasko D."/>
            <person name="Buckles E.L."/>
            <person name="Liou S.-R."/>
            <person name="Boutin A."/>
            <person name="Hackett J."/>
            <person name="Stroud D."/>
            <person name="Mayhew G.F."/>
            <person name="Rose D.J."/>
            <person name="Zhou S."/>
            <person name="Schwartz D.C."/>
            <person name="Perna N.T."/>
            <person name="Mobley H.L.T."/>
            <person name="Donnenberg M.S."/>
            <person name="Blattner F.R."/>
        </authorList>
    </citation>
    <scope>NUCLEOTIDE SEQUENCE [LARGE SCALE GENOMIC DNA]</scope>
    <source>
        <strain>CFT073 / ATCC 700928 / UPEC</strain>
    </source>
</reference>
<reference key="2">
    <citation type="journal article" date="2012" name="PLoS Pathog.">
        <title>Toxin-antitoxin systems are important for niche-specific colonization and stress resistance of uropathogenic Escherichia coli.</title>
        <authorList>
            <person name="Norton J.P."/>
            <person name="Mulvey M.A."/>
        </authorList>
    </citation>
    <scope>DISRUPTION PHENOTYPE</scope>
    <source>
        <strain>CFT073 / ATCC 700928 / UPEC</strain>
    </source>
</reference>
<keyword id="KW-0963">Cytoplasm</keyword>
<keyword id="KW-0238">DNA-binding</keyword>
<keyword id="KW-1185">Reference proteome</keyword>
<protein>
    <recommendedName>
        <fullName>Hha toxicity modulator TomB</fullName>
    </recommendedName>
</protein>
<gene>
    <name type="primary">tomB</name>
    <name type="ordered locus">c0579</name>
</gene>
<sequence>MDEYSPKRHDIAQLKFLCETLYHDCLANLEESNHGWVNDPTSAINLQLNELIEHIATFALNYKIKYNEDNKLIEQIDEYLDDTFMLFSSYGINMQDLQKWRKSGNRLFRCFVNATKENPASLSC</sequence>